<sequence>MSKPIQMERGVKYRDADKMALIPVKNVVTERQELLRKPEWLKIKLPTDSSRIQGIKAAMRKNGLHSVCEEASCPNLSECFNHGTATFMILGAICTRRCPFCDVAHGRPVTPDANEPEKLAQTIQDMGLRYVVITSVDRDDLRDGGAQHFADCISAIRAKNPTIKIETLVPDFRGRMDRALDILTATPPDVFNHNLENVPRVYRQVRPGANYDWSLKLLERFKEAHPDIPTKSGLMVGLGETNAEIVEVMHDLRRHGVTMLTLGQYLQPSRHHLPVQRYVSPAEFDEMKAEAMAMGFTHAACGPFVRSSYHADLQAKGMEVK</sequence>
<proteinExistence type="inferred from homology"/>
<keyword id="KW-0004">4Fe-4S</keyword>
<keyword id="KW-0963">Cytoplasm</keyword>
<keyword id="KW-0408">Iron</keyword>
<keyword id="KW-0411">Iron-sulfur</keyword>
<keyword id="KW-0479">Metal-binding</keyword>
<keyword id="KW-0949">S-adenosyl-L-methionine</keyword>
<keyword id="KW-0808">Transferase</keyword>
<gene>
    <name evidence="1" type="primary">lipA</name>
    <name type="ordered locus">YpAngola_A1855</name>
</gene>
<evidence type="ECO:0000255" key="1">
    <source>
        <dbReference type="HAMAP-Rule" id="MF_00206"/>
    </source>
</evidence>
<evidence type="ECO:0000255" key="2">
    <source>
        <dbReference type="PROSITE-ProRule" id="PRU01266"/>
    </source>
</evidence>
<protein>
    <recommendedName>
        <fullName evidence="1">Lipoyl synthase</fullName>
        <ecNumber evidence="1">2.8.1.8</ecNumber>
    </recommendedName>
    <alternativeName>
        <fullName evidence="1">Lip-syn</fullName>
        <shortName evidence="1">LS</shortName>
    </alternativeName>
    <alternativeName>
        <fullName evidence="1">Lipoate synthase</fullName>
    </alternativeName>
    <alternativeName>
        <fullName evidence="1">Lipoic acid synthase</fullName>
    </alternativeName>
    <alternativeName>
        <fullName evidence="1">Sulfur insertion protein LipA</fullName>
    </alternativeName>
</protein>
<accession>A9R703</accession>
<name>LIPA_YERPG</name>
<comment type="function">
    <text evidence="1">Catalyzes the radical-mediated insertion of two sulfur atoms into the C-6 and C-8 positions of the octanoyl moiety bound to the lipoyl domains of lipoate-dependent enzymes, thereby converting the octanoylated domains into lipoylated derivatives.</text>
</comment>
<comment type="catalytic activity">
    <reaction evidence="1">
        <text>[[Fe-S] cluster scaffold protein carrying a second [4Fe-4S](2+) cluster] + N(6)-octanoyl-L-lysyl-[protein] + 2 oxidized [2Fe-2S]-[ferredoxin] + 2 S-adenosyl-L-methionine + 4 H(+) = [[Fe-S] cluster scaffold protein] + N(6)-[(R)-dihydrolipoyl]-L-lysyl-[protein] + 4 Fe(3+) + 2 hydrogen sulfide + 2 5'-deoxyadenosine + 2 L-methionine + 2 reduced [2Fe-2S]-[ferredoxin]</text>
        <dbReference type="Rhea" id="RHEA:16585"/>
        <dbReference type="Rhea" id="RHEA-COMP:9928"/>
        <dbReference type="Rhea" id="RHEA-COMP:10000"/>
        <dbReference type="Rhea" id="RHEA-COMP:10001"/>
        <dbReference type="Rhea" id="RHEA-COMP:10475"/>
        <dbReference type="Rhea" id="RHEA-COMP:14568"/>
        <dbReference type="Rhea" id="RHEA-COMP:14569"/>
        <dbReference type="ChEBI" id="CHEBI:15378"/>
        <dbReference type="ChEBI" id="CHEBI:17319"/>
        <dbReference type="ChEBI" id="CHEBI:29034"/>
        <dbReference type="ChEBI" id="CHEBI:29919"/>
        <dbReference type="ChEBI" id="CHEBI:33722"/>
        <dbReference type="ChEBI" id="CHEBI:33737"/>
        <dbReference type="ChEBI" id="CHEBI:33738"/>
        <dbReference type="ChEBI" id="CHEBI:57844"/>
        <dbReference type="ChEBI" id="CHEBI:59789"/>
        <dbReference type="ChEBI" id="CHEBI:78809"/>
        <dbReference type="ChEBI" id="CHEBI:83100"/>
        <dbReference type="EC" id="2.8.1.8"/>
    </reaction>
</comment>
<comment type="cofactor">
    <cofactor evidence="1">
        <name>[4Fe-4S] cluster</name>
        <dbReference type="ChEBI" id="CHEBI:49883"/>
    </cofactor>
    <text evidence="1">Binds 2 [4Fe-4S] clusters per subunit. One cluster is coordinated with 3 cysteines and an exchangeable S-adenosyl-L-methionine.</text>
</comment>
<comment type="pathway">
    <text evidence="1">Protein modification; protein lipoylation via endogenous pathway; protein N(6)-(lipoyl)lysine from octanoyl-[acyl-carrier-protein]: step 2/2.</text>
</comment>
<comment type="subcellular location">
    <subcellularLocation>
        <location evidence="1">Cytoplasm</location>
    </subcellularLocation>
</comment>
<comment type="similarity">
    <text evidence="1">Belongs to the radical SAM superfamily. Lipoyl synthase family.</text>
</comment>
<organism>
    <name type="scientific">Yersinia pestis bv. Antiqua (strain Angola)</name>
    <dbReference type="NCBI Taxonomy" id="349746"/>
    <lineage>
        <taxon>Bacteria</taxon>
        <taxon>Pseudomonadati</taxon>
        <taxon>Pseudomonadota</taxon>
        <taxon>Gammaproteobacteria</taxon>
        <taxon>Enterobacterales</taxon>
        <taxon>Yersiniaceae</taxon>
        <taxon>Yersinia</taxon>
    </lineage>
</organism>
<dbReference type="EC" id="2.8.1.8" evidence="1"/>
<dbReference type="EMBL" id="CP000901">
    <property type="protein sequence ID" value="ABX87091.1"/>
    <property type="molecule type" value="Genomic_DNA"/>
</dbReference>
<dbReference type="RefSeq" id="WP_002210320.1">
    <property type="nucleotide sequence ID" value="NZ_CP009935.1"/>
</dbReference>
<dbReference type="SMR" id="A9R703"/>
<dbReference type="GeneID" id="96664611"/>
<dbReference type="KEGG" id="ypg:YpAngola_A1855"/>
<dbReference type="PATRIC" id="fig|349746.12.peg.2830"/>
<dbReference type="UniPathway" id="UPA00538">
    <property type="reaction ID" value="UER00593"/>
</dbReference>
<dbReference type="GO" id="GO:0005737">
    <property type="term" value="C:cytoplasm"/>
    <property type="evidence" value="ECO:0007669"/>
    <property type="project" value="UniProtKB-SubCell"/>
</dbReference>
<dbReference type="GO" id="GO:0051539">
    <property type="term" value="F:4 iron, 4 sulfur cluster binding"/>
    <property type="evidence" value="ECO:0007669"/>
    <property type="project" value="UniProtKB-UniRule"/>
</dbReference>
<dbReference type="GO" id="GO:0016992">
    <property type="term" value="F:lipoate synthase activity"/>
    <property type="evidence" value="ECO:0007669"/>
    <property type="project" value="UniProtKB-UniRule"/>
</dbReference>
<dbReference type="GO" id="GO:0046872">
    <property type="term" value="F:metal ion binding"/>
    <property type="evidence" value="ECO:0007669"/>
    <property type="project" value="UniProtKB-KW"/>
</dbReference>
<dbReference type="CDD" id="cd01335">
    <property type="entry name" value="Radical_SAM"/>
    <property type="match status" value="1"/>
</dbReference>
<dbReference type="FunFam" id="3.20.20.70:FF:000023">
    <property type="entry name" value="Lipoyl synthase"/>
    <property type="match status" value="1"/>
</dbReference>
<dbReference type="Gene3D" id="3.20.20.70">
    <property type="entry name" value="Aldolase class I"/>
    <property type="match status" value="1"/>
</dbReference>
<dbReference type="HAMAP" id="MF_00206">
    <property type="entry name" value="Lipoyl_synth"/>
    <property type="match status" value="1"/>
</dbReference>
<dbReference type="InterPro" id="IPR013785">
    <property type="entry name" value="Aldolase_TIM"/>
</dbReference>
<dbReference type="InterPro" id="IPR006638">
    <property type="entry name" value="Elp3/MiaA/NifB-like_rSAM"/>
</dbReference>
<dbReference type="InterPro" id="IPR031691">
    <property type="entry name" value="LIAS_N"/>
</dbReference>
<dbReference type="InterPro" id="IPR003698">
    <property type="entry name" value="Lipoyl_synth"/>
</dbReference>
<dbReference type="InterPro" id="IPR007197">
    <property type="entry name" value="rSAM"/>
</dbReference>
<dbReference type="NCBIfam" id="TIGR00510">
    <property type="entry name" value="lipA"/>
    <property type="match status" value="1"/>
</dbReference>
<dbReference type="NCBIfam" id="NF004019">
    <property type="entry name" value="PRK05481.1"/>
    <property type="match status" value="1"/>
</dbReference>
<dbReference type="NCBIfam" id="NF009544">
    <property type="entry name" value="PRK12928.1"/>
    <property type="match status" value="1"/>
</dbReference>
<dbReference type="PANTHER" id="PTHR10949">
    <property type="entry name" value="LIPOYL SYNTHASE"/>
    <property type="match status" value="1"/>
</dbReference>
<dbReference type="PANTHER" id="PTHR10949:SF0">
    <property type="entry name" value="LIPOYL SYNTHASE, MITOCHONDRIAL"/>
    <property type="match status" value="1"/>
</dbReference>
<dbReference type="Pfam" id="PF16881">
    <property type="entry name" value="LIAS_N"/>
    <property type="match status" value="1"/>
</dbReference>
<dbReference type="Pfam" id="PF04055">
    <property type="entry name" value="Radical_SAM"/>
    <property type="match status" value="1"/>
</dbReference>
<dbReference type="PIRSF" id="PIRSF005963">
    <property type="entry name" value="Lipoyl_synth"/>
    <property type="match status" value="1"/>
</dbReference>
<dbReference type="SFLD" id="SFLDF00271">
    <property type="entry name" value="lipoyl_synthase"/>
    <property type="match status" value="1"/>
</dbReference>
<dbReference type="SFLD" id="SFLDG01058">
    <property type="entry name" value="lipoyl_synthase_like"/>
    <property type="match status" value="1"/>
</dbReference>
<dbReference type="SMART" id="SM00729">
    <property type="entry name" value="Elp3"/>
    <property type="match status" value="1"/>
</dbReference>
<dbReference type="SUPFAM" id="SSF102114">
    <property type="entry name" value="Radical SAM enzymes"/>
    <property type="match status" value="1"/>
</dbReference>
<dbReference type="PROSITE" id="PS51918">
    <property type="entry name" value="RADICAL_SAM"/>
    <property type="match status" value="1"/>
</dbReference>
<reference key="1">
    <citation type="journal article" date="2010" name="J. Bacteriol.">
        <title>Genome sequence of the deep-rooted Yersinia pestis strain Angola reveals new insights into the evolution and pangenome of the plague bacterium.</title>
        <authorList>
            <person name="Eppinger M."/>
            <person name="Worsham P.L."/>
            <person name="Nikolich M.P."/>
            <person name="Riley D.R."/>
            <person name="Sebastian Y."/>
            <person name="Mou S."/>
            <person name="Achtman M."/>
            <person name="Lindler L.E."/>
            <person name="Ravel J."/>
        </authorList>
    </citation>
    <scope>NUCLEOTIDE SEQUENCE [LARGE SCALE GENOMIC DNA]</scope>
    <source>
        <strain>Angola</strain>
    </source>
</reference>
<feature type="chain" id="PRO_1000099647" description="Lipoyl synthase">
    <location>
        <begin position="1"/>
        <end position="321"/>
    </location>
</feature>
<feature type="domain" description="Radical SAM core" evidence="2">
    <location>
        <begin position="80"/>
        <end position="297"/>
    </location>
</feature>
<feature type="binding site" evidence="1">
    <location>
        <position position="68"/>
    </location>
    <ligand>
        <name>[4Fe-4S] cluster</name>
        <dbReference type="ChEBI" id="CHEBI:49883"/>
        <label>1</label>
    </ligand>
</feature>
<feature type="binding site" evidence="1">
    <location>
        <position position="73"/>
    </location>
    <ligand>
        <name>[4Fe-4S] cluster</name>
        <dbReference type="ChEBI" id="CHEBI:49883"/>
        <label>1</label>
    </ligand>
</feature>
<feature type="binding site" evidence="1">
    <location>
        <position position="79"/>
    </location>
    <ligand>
        <name>[4Fe-4S] cluster</name>
        <dbReference type="ChEBI" id="CHEBI:49883"/>
        <label>1</label>
    </ligand>
</feature>
<feature type="binding site" evidence="1">
    <location>
        <position position="94"/>
    </location>
    <ligand>
        <name>[4Fe-4S] cluster</name>
        <dbReference type="ChEBI" id="CHEBI:49883"/>
        <label>2</label>
        <note>4Fe-4S-S-AdoMet</note>
    </ligand>
</feature>
<feature type="binding site" evidence="1">
    <location>
        <position position="98"/>
    </location>
    <ligand>
        <name>[4Fe-4S] cluster</name>
        <dbReference type="ChEBI" id="CHEBI:49883"/>
        <label>2</label>
        <note>4Fe-4S-S-AdoMet</note>
    </ligand>
</feature>
<feature type="binding site" evidence="1">
    <location>
        <position position="101"/>
    </location>
    <ligand>
        <name>[4Fe-4S] cluster</name>
        <dbReference type="ChEBI" id="CHEBI:49883"/>
        <label>2</label>
        <note>4Fe-4S-S-AdoMet</note>
    </ligand>
</feature>
<feature type="binding site" evidence="1">
    <location>
        <position position="308"/>
    </location>
    <ligand>
        <name>[4Fe-4S] cluster</name>
        <dbReference type="ChEBI" id="CHEBI:49883"/>
        <label>1</label>
    </ligand>
</feature>